<accession>Q27245</accession>
<reference key="1">
    <citation type="journal article" date="1998" name="Science">
        <title>Genome sequence of the nematode C. elegans: a platform for investigating biology.</title>
        <authorList>
            <consortium name="The C. elegans sequencing consortium"/>
        </authorList>
    </citation>
    <scope>NUCLEOTIDE SEQUENCE [LARGE SCALE GENOMIC DNA]</scope>
    <source>
        <strain>Bristol N2</strain>
    </source>
</reference>
<proteinExistence type="inferred from homology"/>
<gene>
    <name type="primary">lap-2</name>
    <name type="ORF">W07G4.4</name>
</gene>
<organism>
    <name type="scientific">Caenorhabditis elegans</name>
    <dbReference type="NCBI Taxonomy" id="6239"/>
    <lineage>
        <taxon>Eukaryota</taxon>
        <taxon>Metazoa</taxon>
        <taxon>Ecdysozoa</taxon>
        <taxon>Nematoda</taxon>
        <taxon>Chromadorea</taxon>
        <taxon>Rhabditida</taxon>
        <taxon>Rhabditina</taxon>
        <taxon>Rhabditomorpha</taxon>
        <taxon>Rhabditoidea</taxon>
        <taxon>Rhabditidae</taxon>
        <taxon>Peloderinae</taxon>
        <taxon>Caenorhabditis</taxon>
    </lineage>
</organism>
<feature type="chain" id="PRO_0000165854" description="Putative aminopeptidase W07G4.4">
    <location>
        <begin position="1"/>
        <end position="522"/>
    </location>
</feature>
<feature type="active site" evidence="2">
    <location>
        <position position="283"/>
    </location>
</feature>
<feature type="active site" evidence="2">
    <location>
        <position position="358"/>
    </location>
</feature>
<feature type="binding site" evidence="1">
    <location>
        <position position="271"/>
    </location>
    <ligand>
        <name>Zn(2+)</name>
        <dbReference type="ChEBI" id="CHEBI:29105"/>
        <label>2</label>
    </ligand>
</feature>
<feature type="binding site" evidence="1">
    <location>
        <position position="276"/>
    </location>
    <ligand>
        <name>Zn(2+)</name>
        <dbReference type="ChEBI" id="CHEBI:29105"/>
        <label>1</label>
    </ligand>
</feature>
<feature type="binding site" evidence="1">
    <location>
        <position position="276"/>
    </location>
    <ligand>
        <name>Zn(2+)</name>
        <dbReference type="ChEBI" id="CHEBI:29105"/>
        <label>2</label>
    </ligand>
</feature>
<feature type="binding site" evidence="1">
    <location>
        <position position="294"/>
    </location>
    <ligand>
        <name>Zn(2+)</name>
        <dbReference type="ChEBI" id="CHEBI:29105"/>
        <label>2</label>
    </ligand>
</feature>
<feature type="binding site" evidence="1">
    <location>
        <position position="354"/>
    </location>
    <ligand>
        <name>Zn(2+)</name>
        <dbReference type="ChEBI" id="CHEBI:29105"/>
        <label>1</label>
    </ligand>
</feature>
<feature type="binding site" evidence="1">
    <location>
        <position position="356"/>
    </location>
    <ligand>
        <name>Zn(2+)</name>
        <dbReference type="ChEBI" id="CHEBI:29105"/>
        <label>1</label>
    </ligand>
</feature>
<feature type="binding site" evidence="1">
    <location>
        <position position="356"/>
    </location>
    <ligand>
        <name>Zn(2+)</name>
        <dbReference type="ChEBI" id="CHEBI:29105"/>
        <label>2</label>
    </ligand>
</feature>
<keyword id="KW-0031">Aminopeptidase</keyword>
<keyword id="KW-0378">Hydrolase</keyword>
<keyword id="KW-0479">Metal-binding</keyword>
<keyword id="KW-0645">Protease</keyword>
<keyword id="KW-1185">Reference proteome</keyword>
<keyword id="KW-0862">Zinc</keyword>
<dbReference type="EC" id="3.4.11.-"/>
<dbReference type="EMBL" id="Z78018">
    <property type="protein sequence ID" value="CAB01448.1"/>
    <property type="molecule type" value="Genomic_DNA"/>
</dbReference>
<dbReference type="PIR" id="T26276">
    <property type="entry name" value="T26276"/>
</dbReference>
<dbReference type="RefSeq" id="NP_506260.1">
    <property type="nucleotide sequence ID" value="NM_073859.6"/>
</dbReference>
<dbReference type="SMR" id="Q27245"/>
<dbReference type="BioGRID" id="44809">
    <property type="interactions" value="22"/>
</dbReference>
<dbReference type="FunCoup" id="Q27245">
    <property type="interactions" value="962"/>
</dbReference>
<dbReference type="STRING" id="6239.W07G4.4.1"/>
<dbReference type="PaxDb" id="6239-W07G4.4"/>
<dbReference type="PeptideAtlas" id="Q27245"/>
<dbReference type="EnsemblMetazoa" id="W07G4.4.1">
    <property type="protein sequence ID" value="W07G4.4.1"/>
    <property type="gene ID" value="WBGene00002250"/>
</dbReference>
<dbReference type="GeneID" id="179790"/>
<dbReference type="KEGG" id="cel:CELE_W07G4.4"/>
<dbReference type="UCSC" id="W07G4.4">
    <property type="organism name" value="c. elegans"/>
</dbReference>
<dbReference type="AGR" id="WB:WBGene00002250"/>
<dbReference type="CTD" id="179790"/>
<dbReference type="WormBase" id="W07G4.4">
    <property type="protein sequence ID" value="CE03794"/>
    <property type="gene ID" value="WBGene00002250"/>
    <property type="gene designation" value="lap-2"/>
</dbReference>
<dbReference type="eggNOG" id="KOG2597">
    <property type="taxonomic scope" value="Eukaryota"/>
</dbReference>
<dbReference type="GeneTree" id="ENSGT00530000063255"/>
<dbReference type="HOGENOM" id="CLU_013734_0_1_1"/>
<dbReference type="InParanoid" id="Q27245"/>
<dbReference type="OMA" id="ISCFKAP"/>
<dbReference type="OrthoDB" id="10041421at2759"/>
<dbReference type="PhylomeDB" id="Q27245"/>
<dbReference type="PRO" id="PR:Q27245"/>
<dbReference type="Proteomes" id="UP000001940">
    <property type="component" value="Chromosome V"/>
</dbReference>
<dbReference type="Bgee" id="WBGene00002250">
    <property type="expression patterns" value="Expressed in germ line (C elegans) and 4 other cell types or tissues"/>
</dbReference>
<dbReference type="GO" id="GO:0005737">
    <property type="term" value="C:cytoplasm"/>
    <property type="evidence" value="ECO:0000318"/>
    <property type="project" value="GO_Central"/>
</dbReference>
<dbReference type="GO" id="GO:0030145">
    <property type="term" value="F:manganese ion binding"/>
    <property type="evidence" value="ECO:0007669"/>
    <property type="project" value="InterPro"/>
</dbReference>
<dbReference type="GO" id="GO:0070006">
    <property type="term" value="F:metalloaminopeptidase activity"/>
    <property type="evidence" value="ECO:0007669"/>
    <property type="project" value="InterPro"/>
</dbReference>
<dbReference type="GO" id="GO:0008233">
    <property type="term" value="F:peptidase activity"/>
    <property type="evidence" value="ECO:0000318"/>
    <property type="project" value="GO_Central"/>
</dbReference>
<dbReference type="GO" id="GO:0006508">
    <property type="term" value="P:proteolysis"/>
    <property type="evidence" value="ECO:0000318"/>
    <property type="project" value="GO_Central"/>
</dbReference>
<dbReference type="CDD" id="cd00433">
    <property type="entry name" value="Peptidase_M17"/>
    <property type="match status" value="1"/>
</dbReference>
<dbReference type="Gene3D" id="3.40.630.10">
    <property type="entry name" value="Zn peptidases"/>
    <property type="match status" value="1"/>
</dbReference>
<dbReference type="InterPro" id="IPR011356">
    <property type="entry name" value="Leucine_aapep/pepB"/>
</dbReference>
<dbReference type="InterPro" id="IPR000819">
    <property type="entry name" value="Peptidase_M17_C"/>
</dbReference>
<dbReference type="PANTHER" id="PTHR11963:SF48">
    <property type="entry name" value="DIPEPTIDASE B, ISOFORM A"/>
    <property type="match status" value="1"/>
</dbReference>
<dbReference type="PANTHER" id="PTHR11963">
    <property type="entry name" value="LEUCINE AMINOPEPTIDASE-RELATED"/>
    <property type="match status" value="1"/>
</dbReference>
<dbReference type="Pfam" id="PF00883">
    <property type="entry name" value="Peptidase_M17"/>
    <property type="match status" value="1"/>
</dbReference>
<dbReference type="PRINTS" id="PR00481">
    <property type="entry name" value="LAMNOPPTDASE"/>
</dbReference>
<dbReference type="SUPFAM" id="SSF53187">
    <property type="entry name" value="Zn-dependent exopeptidases"/>
    <property type="match status" value="1"/>
</dbReference>
<dbReference type="PROSITE" id="PS00631">
    <property type="entry name" value="CYTOSOL_AP"/>
    <property type="match status" value="1"/>
</dbReference>
<comment type="cofactor">
    <cofactor evidence="1">
        <name>Zn(2+)</name>
        <dbReference type="ChEBI" id="CHEBI:29105"/>
    </cofactor>
    <text evidence="1">Binds 2 Zn(2+) ions per subunit.</text>
</comment>
<comment type="similarity">
    <text evidence="3">Belongs to the peptidase M17 family.</text>
</comment>
<name>YH24_CAEEL</name>
<sequence>MSLQSLLSTKIVRATSIADAAFDAVVLVGSQDNVQQFGAIQQVSAIAPAVNNFLKLHSGAFNSTSLVQVDSSVVPSGRLILSGTGNVSRDYDDVRRYQAAARKGISMALSAGVKSPLLITLPNSRFPNAELVAALGALTPVYTPLNVREEENKQKLNQLGLLAIGNSDTSARLEKLVEAYDASFTVCRDVGEAGPERMAPPRVAEYIQGAFANGNIKVTVVDDQSVILKDFPLMAAVNRAANCVKEHQARLIRLEYVGEGETQDTFFVVGKGVTIDTGGCDLKTGGHMFGMCRDKYGSAVVGGFFKAIDVLKPKNIKAVGYMCMVRNSIGSHAYTCDEVITSRSGKRIHIYNTDAEGRLTMLDPLTLAKEEALNAKNPHLFTVATLTGHEVLSYGYYAAIMDNGPAKASGWARRVQNVGDEFGQPIEISRLHPEDFAFHMAECEQADLRQGNTKPSVATLRGHQTPAAFLQMASRIDEHGTNSSHPLKYSHIDMGGCSGDHPSVSFPNPLVTLVAGLVLPHV</sequence>
<evidence type="ECO:0000250" key="1"/>
<evidence type="ECO:0000255" key="2"/>
<evidence type="ECO:0000305" key="3"/>
<protein>
    <recommendedName>
        <fullName>Putative aminopeptidase W07G4.4</fullName>
        <ecNumber>3.4.11.-</ecNumber>
    </recommendedName>
</protein>